<name>SPIR2_HUMAN</name>
<gene>
    <name type="primary">SPIRE2</name>
    <name type="synonym">KIAA1832</name>
    <name type="synonym">SPIR2</name>
</gene>
<feature type="chain" id="PRO_0000320023" description="Protein spire homolog 2">
    <location>
        <begin position="1"/>
        <end position="714"/>
    </location>
</feature>
<feature type="domain" description="KIND" evidence="5">
    <location>
        <begin position="22"/>
        <end position="203"/>
    </location>
</feature>
<feature type="domain" description="WH2 1" evidence="4">
    <location>
        <begin position="248"/>
        <end position="262"/>
    </location>
</feature>
<feature type="domain" description="WH2 2" evidence="4">
    <location>
        <begin position="278"/>
        <end position="296"/>
    </location>
</feature>
<feature type="domain" description="WH2 3" evidence="4">
    <location>
        <begin position="342"/>
        <end position="359"/>
    </location>
</feature>
<feature type="region of interest" description="Disordered" evidence="6">
    <location>
        <begin position="136"/>
        <end position="162"/>
    </location>
</feature>
<feature type="region of interest" description="Disordered" evidence="6">
    <location>
        <begin position="453"/>
        <end position="516"/>
    </location>
</feature>
<feature type="region of interest" description="Spir-box">
    <location>
        <begin position="534"/>
        <end position="554"/>
    </location>
</feature>
<feature type="compositionally biased region" description="Polar residues" evidence="6">
    <location>
        <begin position="486"/>
        <end position="496"/>
    </location>
</feature>
<feature type="modified residue" description="Phosphoserine" evidence="12 13">
    <location>
        <position position="371"/>
    </location>
</feature>
<feature type="modified residue" description="Phosphoserine" evidence="13">
    <location>
        <position position="440"/>
    </location>
</feature>
<feature type="modified residue" description="Phosphoserine" evidence="12 13">
    <location>
        <position position="442"/>
    </location>
</feature>
<feature type="modified residue" description="Phosphoserine" evidence="13">
    <location>
        <position position="476"/>
    </location>
</feature>
<feature type="splice variant" id="VSP_031568" description="In isoform 4." evidence="10">
    <location>
        <begin position="1"/>
        <end position="131"/>
    </location>
</feature>
<feature type="splice variant" id="VSP_031569" description="In isoform 3." evidence="9">
    <location>
        <begin position="1"/>
        <end position="48"/>
    </location>
</feature>
<feature type="splice variant" id="VSP_031570" description="In isoform 3." evidence="9">
    <original>RGLRGSPGRRLRDTGDLLLRGDGSVGAREPEAAEPATMVVPLASSEA</original>
    <variation>MSCLCLGLLWTDSCCLPGRVLGPLHPPAAFSPPHPPAVPPSDRAPVP</variation>
    <location>
        <begin position="49"/>
        <end position="95"/>
    </location>
</feature>
<feature type="splice variant" id="VSP_031571" description="In isoform 4." evidence="10">
    <location>
        <begin position="296"/>
        <end position="297"/>
    </location>
</feature>
<feature type="splice variant" id="VSP_031572" description="In isoform 2." evidence="10">
    <location>
        <begin position="594"/>
        <end position="641"/>
    </location>
</feature>
<feature type="sequence conflict" description="In Ref. 1; CAD19439." evidence="11" ref="1">
    <original>W</original>
    <variation>L</variation>
    <location>
        <position position="41"/>
    </location>
</feature>
<feature type="sequence conflict" description="In Ref. 4; CAD39070." evidence="11" ref="4">
    <original>M</original>
    <variation>T</variation>
    <location>
        <position position="216"/>
    </location>
</feature>
<feature type="sequence conflict" description="In Ref. 2; BAB47461." evidence="11" ref="2">
    <original>K</original>
    <variation>E</variation>
    <location>
        <position position="307"/>
    </location>
</feature>
<feature type="sequence conflict" description="In Ref. 3; AAI39733." evidence="11" ref="3">
    <original>L</original>
    <variation>F</variation>
    <location>
        <position position="711"/>
    </location>
</feature>
<feature type="helix" evidence="14">
    <location>
        <begin position="414"/>
        <end position="417"/>
    </location>
</feature>
<evidence type="ECO:0000250" key="1">
    <source>
        <dbReference type="UniProtKB" id="Q08AE8"/>
    </source>
</evidence>
<evidence type="ECO:0000250" key="2">
    <source>
        <dbReference type="UniProtKB" id="Q8K1S6"/>
    </source>
</evidence>
<evidence type="ECO:0000250" key="3">
    <source>
        <dbReference type="UniProtKB" id="Q9U1K1"/>
    </source>
</evidence>
<evidence type="ECO:0000255" key="4">
    <source>
        <dbReference type="PROSITE-ProRule" id="PRU00406"/>
    </source>
</evidence>
<evidence type="ECO:0000255" key="5">
    <source>
        <dbReference type="PROSITE-ProRule" id="PRU00709"/>
    </source>
</evidence>
<evidence type="ECO:0000256" key="6">
    <source>
        <dbReference type="SAM" id="MobiDB-lite"/>
    </source>
</evidence>
<evidence type="ECO:0000269" key="7">
    <source>
    </source>
</evidence>
<evidence type="ECO:0000269" key="8">
    <source>
    </source>
</evidence>
<evidence type="ECO:0000303" key="9">
    <source>
    </source>
</evidence>
<evidence type="ECO:0000303" key="10">
    <source>
    </source>
</evidence>
<evidence type="ECO:0000305" key="11"/>
<evidence type="ECO:0007744" key="12">
    <source>
    </source>
</evidence>
<evidence type="ECO:0007744" key="13">
    <source>
    </source>
</evidence>
<evidence type="ECO:0007829" key="14">
    <source>
        <dbReference type="PDB" id="5JCY"/>
    </source>
</evidence>
<proteinExistence type="evidence at protein level"/>
<reference key="1">
    <citation type="submission" date="2001-12" db="EMBL/GenBank/DDBJ databases">
        <title>The Drosophila spire gene is highly conserved between species.</title>
        <authorList>
            <person name="Kerkhoff E."/>
            <person name="Leberfinger C.B."/>
            <person name="Borawski J.M."/>
            <person name="Rapp U.R."/>
            <person name="Doerks T."/>
            <person name="Bork P."/>
        </authorList>
    </citation>
    <scope>NUCLEOTIDE SEQUENCE [MRNA] (ISOFORM 1)</scope>
</reference>
<reference key="2">
    <citation type="journal article" date="2001" name="DNA Res.">
        <title>Prediction of the coding sequences of unidentified human genes. XX. The complete sequences of 100 new cDNA clones from brain which code for large proteins in vitro.</title>
        <authorList>
            <person name="Nagase T."/>
            <person name="Nakayama M."/>
            <person name="Nakajima D."/>
            <person name="Kikuno R."/>
            <person name="Ohara O."/>
        </authorList>
    </citation>
    <scope>NUCLEOTIDE SEQUENCE [LARGE SCALE MRNA] (ISOFORM 3)</scope>
    <source>
        <tissue>Brain</tissue>
    </source>
</reference>
<reference key="3">
    <citation type="journal article" date="2004" name="Genome Res.">
        <title>The status, quality, and expansion of the NIH full-length cDNA project: the Mammalian Gene Collection (MGC).</title>
        <authorList>
            <consortium name="The MGC Project Team"/>
        </authorList>
    </citation>
    <scope>NUCLEOTIDE SEQUENCE [LARGE SCALE MRNA] (ISOFORMS 2 AND 4)</scope>
    <source>
        <tissue>Brain</tissue>
        <tissue>Skin</tissue>
    </source>
</reference>
<reference key="4">
    <citation type="journal article" date="2007" name="BMC Genomics">
        <title>The full-ORF clone resource of the German cDNA consortium.</title>
        <authorList>
            <person name="Bechtel S."/>
            <person name="Rosenfelder H."/>
            <person name="Duda A."/>
            <person name="Schmidt C.P."/>
            <person name="Ernst U."/>
            <person name="Wellenreuther R."/>
            <person name="Mehrle A."/>
            <person name="Schuster C."/>
            <person name="Bahr A."/>
            <person name="Bloecker H."/>
            <person name="Heubner D."/>
            <person name="Hoerlein A."/>
            <person name="Michel G."/>
            <person name="Wedler H."/>
            <person name="Koehrer K."/>
            <person name="Ottenwaelder B."/>
            <person name="Poustka A."/>
            <person name="Wiemann S."/>
            <person name="Schupp I."/>
        </authorList>
    </citation>
    <scope>NUCLEOTIDE SEQUENCE [LARGE SCALE MRNA] OF 53-714 (ISOFORM 1)</scope>
    <source>
        <tissue>Brain</tissue>
    </source>
</reference>
<reference key="5">
    <citation type="journal article" date="2008" name="Proc. Natl. Acad. Sci. U.S.A.">
        <title>A quantitative atlas of mitotic phosphorylation.</title>
        <authorList>
            <person name="Dephoure N."/>
            <person name="Zhou C."/>
            <person name="Villen J."/>
            <person name="Beausoleil S.A."/>
            <person name="Bakalarski C.E."/>
            <person name="Elledge S.J."/>
            <person name="Gygi S.P."/>
        </authorList>
    </citation>
    <scope>PHOSPHORYLATION [LARGE SCALE ANALYSIS] AT SER-371 AND SER-442</scope>
    <scope>IDENTIFICATION BY MASS SPECTROMETRY [LARGE SCALE ANALYSIS]</scope>
    <source>
        <tissue>Cervix carcinoma</tissue>
    </source>
</reference>
<reference key="6">
    <citation type="journal article" date="2011" name="Curr. Biol.">
        <title>Spire-type actin nucleators cooperate with Formin-2 to drive asymmetric oocyte division.</title>
        <authorList>
            <person name="Pfender S."/>
            <person name="Kuznetsov V."/>
            <person name="Pleiser S."/>
            <person name="Kerkhoff E."/>
            <person name="Schuh M."/>
        </authorList>
    </citation>
    <scope>FUNCTION</scope>
</reference>
<reference key="7">
    <citation type="journal article" date="2013" name="J. Proteome Res.">
        <title>Toward a comprehensive characterization of a human cancer cell phosphoproteome.</title>
        <authorList>
            <person name="Zhou H."/>
            <person name="Di Palma S."/>
            <person name="Preisinger C."/>
            <person name="Peng M."/>
            <person name="Polat A.N."/>
            <person name="Heck A.J."/>
            <person name="Mohammed S."/>
        </authorList>
    </citation>
    <scope>PHOSPHORYLATION [LARGE SCALE ANALYSIS] AT SER-371; SER-440; SER-442 AND SER-476</scope>
    <scope>IDENTIFICATION BY MASS SPECTROMETRY [LARGE SCALE ANALYSIS]</scope>
    <source>
        <tissue>Cervix carcinoma</tissue>
        <tissue>Erythroleukemia</tissue>
    </source>
</reference>
<reference key="8">
    <citation type="journal article" date="2015" name="Elife">
        <title>DNA damage induces nuclear actin filament assembly by Formin -2 and Spire-1/2 that promotes efficient DNA repair.</title>
        <authorList>
            <person name="Belin B.J."/>
            <person name="Lee T."/>
            <person name="Mullins R.D."/>
        </authorList>
    </citation>
    <scope>FUNCTION</scope>
</reference>
<organism>
    <name type="scientific">Homo sapiens</name>
    <name type="common">Human</name>
    <dbReference type="NCBI Taxonomy" id="9606"/>
    <lineage>
        <taxon>Eukaryota</taxon>
        <taxon>Metazoa</taxon>
        <taxon>Chordata</taxon>
        <taxon>Craniata</taxon>
        <taxon>Vertebrata</taxon>
        <taxon>Euteleostomi</taxon>
        <taxon>Mammalia</taxon>
        <taxon>Eutheria</taxon>
        <taxon>Euarchontoglires</taxon>
        <taxon>Primates</taxon>
        <taxon>Haplorrhini</taxon>
        <taxon>Catarrhini</taxon>
        <taxon>Hominidae</taxon>
        <taxon>Homo</taxon>
    </lineage>
</organism>
<comment type="function">
    <text evidence="2 7 8">Acts as an actin nucleation factor, remains associated with the slow-growing pointed end of the new filament (PubMed:21620703). Involved in intracellular vesicle transport along actin fibers, providing a novel link between actin cytoskeleton dynamics and intracellular transport (By similarity). Required for asymmetric spindle positioning and asymmetric cell division during meiosis (PubMed:21620703). Required for normal formation of the cleavage furrow and for polar body extrusion during female germ cell meiosis (PubMed:21620703). Also acts in the nucleus: together with SPIRE1 and SPIRE2, promotes assembly of nuclear actin filaments in response to DNA damage in order to facilitate movement of chromatin and repair factors after DNA damage (PubMed:26287480).</text>
</comment>
<comment type="interaction">
    <interactant intactId="EBI-10963872">
        <id>Q8WWL2-2</id>
    </interactant>
    <interactant intactId="EBI-740220">
        <id>O14964</id>
        <label>HGS</label>
    </interactant>
    <organismsDiffer>false</organismsDiffer>
    <experiments>3</experiments>
</comment>
<comment type="subcellular location">
    <subcellularLocation>
        <location evidence="2">Cytoplasm</location>
        <location evidence="2">Cytoskeleton</location>
    </subcellularLocation>
    <subcellularLocation>
        <location evidence="2">Cytoplasm</location>
        <location evidence="2">Cytosol</location>
    </subcellularLocation>
    <subcellularLocation>
        <location evidence="2">Cell membrane</location>
        <topology evidence="2">Peripheral membrane protein</topology>
        <orientation evidence="2">Cytoplasmic side</orientation>
    </subcellularLocation>
    <subcellularLocation>
        <location evidence="2">Cytoplasmic vesicle membrane</location>
        <topology evidence="2">Peripheral membrane protein</topology>
        <orientation evidence="2">Cytoplasmic side</orientation>
    </subcellularLocation>
    <text evidence="2">Detected at the cleavage furrow during asymmetric oocyte division and polar body extrusion.</text>
</comment>
<comment type="alternative products">
    <event type="alternative splicing"/>
    <isoform>
        <id>Q8WWL2-1</id>
        <name>1</name>
        <sequence type="displayed"/>
    </isoform>
    <isoform>
        <id>Q8WWL2-2</id>
        <name>2</name>
        <sequence type="described" ref="VSP_031572"/>
    </isoform>
    <isoform>
        <id>Q8WWL2-3</id>
        <name>3</name>
        <sequence type="described" ref="VSP_031569 VSP_031570"/>
    </isoform>
    <isoform>
        <id>Q8WWL2-4</id>
        <name>4</name>
        <sequence type="described" ref="VSP_031568 VSP_031571"/>
    </isoform>
</comment>
<comment type="domain">
    <text evidence="3">Binds to actin monomers via the WH2 domain.</text>
</comment>
<comment type="domain">
    <text evidence="1">The Spir-box targets binding to intracellular membrane structures.</text>
</comment>
<comment type="similarity">
    <text evidence="11">Belongs to the spire family.</text>
</comment>
<comment type="sequence caution" evidence="11">
    <conflict type="erroneous initiation">
        <sequence resource="EMBL-CDS" id="BAB47461"/>
    </conflict>
    <text>Extended N-terminus.</text>
</comment>
<comment type="sequence caution" evidence="11">
    <conflict type="erroneous initiation">
        <sequence resource="EMBL-CDS" id="CAD19439"/>
    </conflict>
    <text>Extended N-terminus.</text>
</comment>
<accession>Q8WWL2</accession>
<accession>A4QPB1</accession>
<accession>Q2TA98</accession>
<accession>Q6P433</accession>
<accession>Q8ND47</accession>
<accession>Q96JJ5</accession>
<keyword id="KW-0002">3D-structure</keyword>
<keyword id="KW-0009">Actin-binding</keyword>
<keyword id="KW-0025">Alternative splicing</keyword>
<keyword id="KW-1003">Cell membrane</keyword>
<keyword id="KW-0963">Cytoplasm</keyword>
<keyword id="KW-0968">Cytoplasmic vesicle</keyword>
<keyword id="KW-0206">Cytoskeleton</keyword>
<keyword id="KW-0472">Membrane</keyword>
<keyword id="KW-0597">Phosphoprotein</keyword>
<keyword id="KW-0653">Protein transport</keyword>
<keyword id="KW-1267">Proteomics identification</keyword>
<keyword id="KW-1185">Reference proteome</keyword>
<keyword id="KW-0677">Repeat</keyword>
<keyword id="KW-0813">Transport</keyword>
<protein>
    <recommendedName>
        <fullName>Protein spire homolog 2</fullName>
        <shortName>Spir-2</shortName>
    </recommendedName>
</protein>
<dbReference type="EMBL" id="AJ422077">
    <property type="protein sequence ID" value="CAD19439.1"/>
    <property type="status" value="ALT_INIT"/>
    <property type="molecule type" value="mRNA"/>
</dbReference>
<dbReference type="EMBL" id="AB058735">
    <property type="protein sequence ID" value="BAB47461.1"/>
    <property type="status" value="ALT_INIT"/>
    <property type="molecule type" value="mRNA"/>
</dbReference>
<dbReference type="EMBL" id="BC063706">
    <property type="protein sequence ID" value="AAH63706.1"/>
    <property type="molecule type" value="mRNA"/>
</dbReference>
<dbReference type="EMBL" id="BC111030">
    <property type="protein sequence ID" value="AAI11031.1"/>
    <property type="molecule type" value="mRNA"/>
</dbReference>
<dbReference type="EMBL" id="BC139732">
    <property type="protein sequence ID" value="AAI39733.1"/>
    <property type="molecule type" value="mRNA"/>
</dbReference>
<dbReference type="EMBL" id="AL834408">
    <property type="protein sequence ID" value="CAD39070.1"/>
    <property type="molecule type" value="mRNA"/>
</dbReference>
<dbReference type="CCDS" id="CCDS32516.1">
    <molecule id="Q8WWL2-1"/>
</dbReference>
<dbReference type="RefSeq" id="NP_115827.1">
    <molecule id="Q8WWL2-1"/>
    <property type="nucleotide sequence ID" value="NM_032451.2"/>
</dbReference>
<dbReference type="PDB" id="5JCY">
    <property type="method" value="X-ray"/>
    <property type="resolution" value="1.80 A"/>
    <property type="chains" value="B=401-427"/>
</dbReference>
<dbReference type="PDBsum" id="5JCY"/>
<dbReference type="SMR" id="Q8WWL2"/>
<dbReference type="BioGRID" id="124102">
    <property type="interactions" value="22"/>
</dbReference>
<dbReference type="FunCoup" id="Q8WWL2">
    <property type="interactions" value="400"/>
</dbReference>
<dbReference type="IntAct" id="Q8WWL2">
    <property type="interactions" value="17"/>
</dbReference>
<dbReference type="STRING" id="9606.ENSP00000367494"/>
<dbReference type="DrugBank" id="DB08080">
    <property type="generic name" value="Latrunculin B"/>
</dbReference>
<dbReference type="GlyGen" id="Q8WWL2">
    <property type="glycosylation" value="2 sites, 1 N-linked glycan (1 site), 1 O-linked glycan (1 site)"/>
</dbReference>
<dbReference type="iPTMnet" id="Q8WWL2"/>
<dbReference type="PhosphoSitePlus" id="Q8WWL2"/>
<dbReference type="BioMuta" id="SPIRE2"/>
<dbReference type="DMDM" id="296452951"/>
<dbReference type="jPOST" id="Q8WWL2"/>
<dbReference type="MassIVE" id="Q8WWL2"/>
<dbReference type="PaxDb" id="9606-ENSP00000367494"/>
<dbReference type="PeptideAtlas" id="Q8WWL2"/>
<dbReference type="ProteomicsDB" id="74898">
    <molecule id="Q8WWL2-1"/>
</dbReference>
<dbReference type="ProteomicsDB" id="74899">
    <molecule id="Q8WWL2-2"/>
</dbReference>
<dbReference type="ProteomicsDB" id="74900">
    <molecule id="Q8WWL2-3"/>
</dbReference>
<dbReference type="ProteomicsDB" id="74901">
    <molecule id="Q8WWL2-4"/>
</dbReference>
<dbReference type="Antibodypedia" id="45052">
    <property type="antibodies" value="128 antibodies from 20 providers"/>
</dbReference>
<dbReference type="DNASU" id="84501"/>
<dbReference type="Ensembl" id="ENST00000378247.8">
    <molecule id="Q8WWL2-1"/>
    <property type="protein sequence ID" value="ENSP00000367494.3"/>
    <property type="gene ID" value="ENSG00000204991.11"/>
</dbReference>
<dbReference type="Ensembl" id="ENST00000393062.6">
    <molecule id="Q8WWL2-2"/>
    <property type="protein sequence ID" value="ENSP00000376782.2"/>
    <property type="gene ID" value="ENSG00000204991.11"/>
</dbReference>
<dbReference type="GeneID" id="84501"/>
<dbReference type="KEGG" id="hsa:84501"/>
<dbReference type="MANE-Select" id="ENST00000378247.8">
    <property type="protein sequence ID" value="ENSP00000367494.3"/>
    <property type="RefSeq nucleotide sequence ID" value="NM_032451.2"/>
    <property type="RefSeq protein sequence ID" value="NP_115827.1"/>
</dbReference>
<dbReference type="UCSC" id="uc002foz.2">
    <molecule id="Q8WWL2-1"/>
    <property type="organism name" value="human"/>
</dbReference>
<dbReference type="AGR" id="HGNC:30623"/>
<dbReference type="CTD" id="84501"/>
<dbReference type="DisGeNET" id="84501"/>
<dbReference type="GeneCards" id="SPIRE2"/>
<dbReference type="HGNC" id="HGNC:30623">
    <property type="gene designation" value="SPIRE2"/>
</dbReference>
<dbReference type="HPA" id="ENSG00000204991">
    <property type="expression patterns" value="Tissue enhanced (brain, pituitary gland)"/>
</dbReference>
<dbReference type="MIM" id="609217">
    <property type="type" value="gene"/>
</dbReference>
<dbReference type="neXtProt" id="NX_Q8WWL2"/>
<dbReference type="OpenTargets" id="ENSG00000204991"/>
<dbReference type="PharmGKB" id="PA134926582"/>
<dbReference type="VEuPathDB" id="HostDB:ENSG00000204991"/>
<dbReference type="eggNOG" id="ENOG502QQPN">
    <property type="taxonomic scope" value="Eukaryota"/>
</dbReference>
<dbReference type="GeneTree" id="ENSGT00390000003058"/>
<dbReference type="HOGENOM" id="CLU_018839_1_1_1"/>
<dbReference type="InParanoid" id="Q8WWL2"/>
<dbReference type="OMA" id="IPHACSG"/>
<dbReference type="OrthoDB" id="10043757at2759"/>
<dbReference type="PAN-GO" id="Q8WWL2">
    <property type="GO annotations" value="9 GO annotations based on evolutionary models"/>
</dbReference>
<dbReference type="PhylomeDB" id="Q8WWL2"/>
<dbReference type="TreeFam" id="TF326239"/>
<dbReference type="PathwayCommons" id="Q8WWL2"/>
<dbReference type="SignaLink" id="Q8WWL2"/>
<dbReference type="BioGRID-ORCS" id="84501">
    <property type="hits" value="14 hits in 1166 CRISPR screens"/>
</dbReference>
<dbReference type="ChiTaRS" id="SPIRE2">
    <property type="organism name" value="human"/>
</dbReference>
<dbReference type="GenomeRNAi" id="84501"/>
<dbReference type="Pharos" id="Q8WWL2">
    <property type="development level" value="Tbio"/>
</dbReference>
<dbReference type="PRO" id="PR:Q8WWL2"/>
<dbReference type="Proteomes" id="UP000005640">
    <property type="component" value="Chromosome 16"/>
</dbReference>
<dbReference type="RNAct" id="Q8WWL2">
    <property type="molecule type" value="protein"/>
</dbReference>
<dbReference type="Bgee" id="ENSG00000204991">
    <property type="expression patterns" value="Expressed in pancreatic ductal cell and 156 other cell types or tissues"/>
</dbReference>
<dbReference type="ExpressionAtlas" id="Q8WWL2">
    <property type="expression patterns" value="baseline and differential"/>
</dbReference>
<dbReference type="GO" id="GO:0005938">
    <property type="term" value="C:cell cortex"/>
    <property type="evidence" value="ECO:0000250"/>
    <property type="project" value="UniProtKB"/>
</dbReference>
<dbReference type="GO" id="GO:0032154">
    <property type="term" value="C:cleavage furrow"/>
    <property type="evidence" value="ECO:0007669"/>
    <property type="project" value="Ensembl"/>
</dbReference>
<dbReference type="GO" id="GO:0030659">
    <property type="term" value="C:cytoplasmic vesicle membrane"/>
    <property type="evidence" value="ECO:0000250"/>
    <property type="project" value="UniProtKB"/>
</dbReference>
<dbReference type="GO" id="GO:0005856">
    <property type="term" value="C:cytoskeleton"/>
    <property type="evidence" value="ECO:0007669"/>
    <property type="project" value="UniProtKB-SubCell"/>
</dbReference>
<dbReference type="GO" id="GO:0005829">
    <property type="term" value="C:cytosol"/>
    <property type="evidence" value="ECO:0007669"/>
    <property type="project" value="UniProtKB-SubCell"/>
</dbReference>
<dbReference type="GO" id="GO:0003779">
    <property type="term" value="F:actin binding"/>
    <property type="evidence" value="ECO:0007669"/>
    <property type="project" value="UniProtKB-KW"/>
</dbReference>
<dbReference type="GO" id="GO:0008017">
    <property type="term" value="F:microtubule binding"/>
    <property type="evidence" value="ECO:0000318"/>
    <property type="project" value="GO_Central"/>
</dbReference>
<dbReference type="GO" id="GO:0030036">
    <property type="term" value="P:actin cytoskeleton organization"/>
    <property type="evidence" value="ECO:0000315"/>
    <property type="project" value="UniProtKB"/>
</dbReference>
<dbReference type="GO" id="GO:0051639">
    <property type="term" value="P:actin filament network formation"/>
    <property type="evidence" value="ECO:0000318"/>
    <property type="project" value="GO_Central"/>
</dbReference>
<dbReference type="GO" id="GO:0045010">
    <property type="term" value="P:actin nucleation"/>
    <property type="evidence" value="ECO:0007669"/>
    <property type="project" value="InterPro"/>
</dbReference>
<dbReference type="GO" id="GO:0036089">
    <property type="term" value="P:cleavage furrow formation"/>
    <property type="evidence" value="ECO:0000250"/>
    <property type="project" value="UniProtKB"/>
</dbReference>
<dbReference type="GO" id="GO:0051295">
    <property type="term" value="P:establishment of meiotic spindle localization"/>
    <property type="evidence" value="ECO:0000315"/>
    <property type="project" value="UniProtKB"/>
</dbReference>
<dbReference type="GO" id="GO:0070649">
    <property type="term" value="P:formin-nucleated actin cable assembly"/>
    <property type="evidence" value="ECO:0000315"/>
    <property type="project" value="UniProtKB"/>
</dbReference>
<dbReference type="GO" id="GO:0048193">
    <property type="term" value="P:Golgi vesicle transport"/>
    <property type="evidence" value="ECO:0000318"/>
    <property type="project" value="GO_Central"/>
</dbReference>
<dbReference type="GO" id="GO:0046907">
    <property type="term" value="P:intracellular transport"/>
    <property type="evidence" value="ECO:0000250"/>
    <property type="project" value="UniProtKB"/>
</dbReference>
<dbReference type="GO" id="GO:0040038">
    <property type="term" value="P:polar body extrusion after meiotic divisions"/>
    <property type="evidence" value="ECO:0000250"/>
    <property type="project" value="UniProtKB"/>
</dbReference>
<dbReference type="GO" id="GO:2000781">
    <property type="term" value="P:positive regulation of double-strand break repair"/>
    <property type="evidence" value="ECO:0000315"/>
    <property type="project" value="UniProtKB"/>
</dbReference>
<dbReference type="GO" id="GO:0015031">
    <property type="term" value="P:protein transport"/>
    <property type="evidence" value="ECO:0007669"/>
    <property type="project" value="UniProtKB-KW"/>
</dbReference>
<dbReference type="GO" id="GO:0016192">
    <property type="term" value="P:vesicle-mediated transport"/>
    <property type="evidence" value="ECO:0000250"/>
    <property type="project" value="UniProtKB"/>
</dbReference>
<dbReference type="CDD" id="cd15768">
    <property type="entry name" value="FYVE_SPIR2"/>
    <property type="match status" value="1"/>
</dbReference>
<dbReference type="CDD" id="cd22186">
    <property type="entry name" value="WH2_Spire1-2_r3"/>
    <property type="match status" value="1"/>
</dbReference>
<dbReference type="CDD" id="cd22079">
    <property type="entry name" value="WH2_Spire2_r2"/>
    <property type="match status" value="1"/>
</dbReference>
<dbReference type="CDD" id="cd22081">
    <property type="entry name" value="WH2_Spire2_r4"/>
    <property type="match status" value="1"/>
</dbReference>
<dbReference type="CDD" id="cd22065">
    <property type="entry name" value="WH2_Spire_1-2_r1"/>
    <property type="match status" value="1"/>
</dbReference>
<dbReference type="FunFam" id="1.10.510.10:FF:000455">
    <property type="entry name" value="protein spire homolog 1 isoform X1"/>
    <property type="match status" value="1"/>
</dbReference>
<dbReference type="Gene3D" id="1.10.510.10">
    <property type="entry name" value="Transferase(Phosphotransferase) domain 1"/>
    <property type="match status" value="1"/>
</dbReference>
<dbReference type="InterPro" id="IPR011019">
    <property type="entry name" value="KIND_dom"/>
</dbReference>
<dbReference type="InterPro" id="IPR029901">
    <property type="entry name" value="Spire"/>
</dbReference>
<dbReference type="InterPro" id="IPR011011">
    <property type="entry name" value="Znf_FYVE_PHD"/>
</dbReference>
<dbReference type="PANTHER" id="PTHR21345:SF5">
    <property type="entry name" value="PROTEIN SPIRE HOMOLOG 2"/>
    <property type="match status" value="1"/>
</dbReference>
<dbReference type="PANTHER" id="PTHR21345">
    <property type="entry name" value="SPIRE"/>
    <property type="match status" value="1"/>
</dbReference>
<dbReference type="Pfam" id="PF16474">
    <property type="entry name" value="KIND"/>
    <property type="match status" value="1"/>
</dbReference>
<dbReference type="SMART" id="SM00750">
    <property type="entry name" value="KIND"/>
    <property type="match status" value="1"/>
</dbReference>
<dbReference type="SUPFAM" id="SSF57903">
    <property type="entry name" value="FYVE/PHD zinc finger"/>
    <property type="match status" value="1"/>
</dbReference>
<dbReference type="PROSITE" id="PS51377">
    <property type="entry name" value="KIND"/>
    <property type="match status" value="1"/>
</dbReference>
<dbReference type="PROSITE" id="PS51082">
    <property type="entry name" value="WH2"/>
    <property type="match status" value="3"/>
</dbReference>
<sequence length="714" mass="79671">MARAGSCGGAAAGAGRPEPWELSLEEVLKAYEQPLNEEQAWAVCFQGCRGLRGSPGRRLRDTGDLLLRGDGSVGAREPEAAEPATMVVPLASSEAQTVQSLGFAIYRALDWGLDESEERELSPQLERLIDLMANNDSEDSGCGAADEGYGGPEEEEEAEGVPRSVRTFAQAMRLCAARLTDPRGAQAHYQAVCRALFVETLELRAFLARVREAKEMLQKLREDEPHLETPRAELDSLGHTDWARLWVQLMRELRRGVKLKKVQEQEFNPLPTEFQLTPFEMLMQDIRARNYKLRKVMVDGDIPPRVKKDAHELILDFIRSRPPLKQVSERRLRPLPPKQRSLHEKILEEIKQERRLRPVRGEGWAARGFGSLPCILNACSGDAKSTSCINLSVTDAGGSAQRPRPRVLLKAPTLAEMEEMNTSEEEESPCGEVTLKRDRSFSEHDLAQLRSEVASGLQSATHPPGGTEPPRPRAGSAHVWRPGSRDQGTCPASVSDPSHPLLSNRGSSGDRPEASMTPDAKHLWLEFSHPVESLALTVEEVMDVRRVLVKAEMEKFLQNKELFSSLKKGKICCCCRAKFPLFSWPPSCLFCKRAVCTSCSIKMKMPSKKFGHIPVYTLGFESPQRVSAAKTAPIQRRDIFQSLQGPQWQSVEEAFPHIYSHGCVLKDVCSECTSFVADVVRSSRKSVDVLNTTPRRSRQTQSLYIPNTRTLDFK</sequence>